<organism>
    <name type="scientific">Rhodococcus erythropolis (strain PR4 / NBRC 100887)</name>
    <dbReference type="NCBI Taxonomy" id="234621"/>
    <lineage>
        <taxon>Bacteria</taxon>
        <taxon>Bacillati</taxon>
        <taxon>Actinomycetota</taxon>
        <taxon>Actinomycetes</taxon>
        <taxon>Mycobacteriales</taxon>
        <taxon>Nocardiaceae</taxon>
        <taxon>Rhodococcus</taxon>
        <taxon>Rhodococcus erythropolis group</taxon>
    </lineage>
</organism>
<reference key="1">
    <citation type="submission" date="2005-03" db="EMBL/GenBank/DDBJ databases">
        <title>Comparison of the complete genome sequences of Rhodococcus erythropolis PR4 and Rhodococcus opacus B4.</title>
        <authorList>
            <person name="Takarada H."/>
            <person name="Sekine M."/>
            <person name="Hosoyama A."/>
            <person name="Yamada R."/>
            <person name="Fujisawa T."/>
            <person name="Omata S."/>
            <person name="Shimizu A."/>
            <person name="Tsukatani N."/>
            <person name="Tanikawa S."/>
            <person name="Fujita N."/>
            <person name="Harayama S."/>
        </authorList>
    </citation>
    <scope>NUCLEOTIDE SEQUENCE [LARGE SCALE GENOMIC DNA]</scope>
    <source>
        <strain>PR4 / NBRC 100887</strain>
    </source>
</reference>
<feature type="chain" id="PRO_1000203312" description="tRNA-specific 2-thiouridylase MnmA">
    <location>
        <begin position="1"/>
        <end position="370"/>
    </location>
</feature>
<feature type="region of interest" description="Interaction with tRNA" evidence="1">
    <location>
        <begin position="143"/>
        <end position="145"/>
    </location>
</feature>
<feature type="active site" description="Nucleophile" evidence="1">
    <location>
        <position position="101"/>
    </location>
</feature>
<feature type="active site" description="Cysteine persulfide intermediate" evidence="1">
    <location>
        <position position="193"/>
    </location>
</feature>
<feature type="binding site" evidence="1">
    <location>
        <begin position="6"/>
        <end position="13"/>
    </location>
    <ligand>
        <name>ATP</name>
        <dbReference type="ChEBI" id="CHEBI:30616"/>
    </ligand>
</feature>
<feature type="binding site" evidence="1">
    <location>
        <position position="32"/>
    </location>
    <ligand>
        <name>ATP</name>
        <dbReference type="ChEBI" id="CHEBI:30616"/>
    </ligand>
</feature>
<feature type="binding site" evidence="1">
    <location>
        <position position="125"/>
    </location>
    <ligand>
        <name>ATP</name>
        <dbReference type="ChEBI" id="CHEBI:30616"/>
    </ligand>
</feature>
<feature type="site" description="Interaction with tRNA" evidence="1">
    <location>
        <position position="126"/>
    </location>
</feature>
<feature type="site" description="Interaction with tRNA" evidence="1">
    <location>
        <position position="339"/>
    </location>
</feature>
<feature type="disulfide bond" description="Alternate" evidence="1">
    <location>
        <begin position="101"/>
        <end position="193"/>
    </location>
</feature>
<name>MNMA_RHOE4</name>
<gene>
    <name evidence="1" type="primary">mnmA</name>
    <name type="ordered locus">RER_23780</name>
</gene>
<sequence length="370" mass="38361">MRVLAAMSGGVDSAVAAARAVAAGHDVVGVHLALSTAPGALRTGSRGCCSKEDAGDARRAADVLGIPFYVWDFADRFKEDVIDDFVASYAAGETPNPCLRCNEKIKFTALADRAVALGFDAVATGHYARLEDGVLRRAVDADKDQSYVLGVLTADQLSRAMFPIGDTPKEQIREEAAERGLAVANKPDSHDICFIPTGDTRAFLGARIGVRPGSVVDADSGEVLAAHDGVHGFTIGQRKGLGVEGPAGDGRPRYVTAIEPETGTVRVGSAKNLDVWAISAQRAIWTSGQAPEGPVECMVQVRAHGGLAQAVAEAVDDGTSGGGISISLREPLTGVAKGQAVVLYRPDSELGDQVLGSGTISGTESEPNTL</sequence>
<accession>C0ZXK1</accession>
<protein>
    <recommendedName>
        <fullName evidence="1">tRNA-specific 2-thiouridylase MnmA</fullName>
        <ecNumber evidence="1">2.8.1.13</ecNumber>
    </recommendedName>
</protein>
<dbReference type="EC" id="2.8.1.13" evidence="1"/>
<dbReference type="EMBL" id="AP008957">
    <property type="protein sequence ID" value="BAH33086.1"/>
    <property type="molecule type" value="Genomic_DNA"/>
</dbReference>
<dbReference type="RefSeq" id="WP_003944736.1">
    <property type="nucleotide sequence ID" value="NC_012490.1"/>
</dbReference>
<dbReference type="SMR" id="C0ZXK1"/>
<dbReference type="KEGG" id="rer:RER_23780"/>
<dbReference type="eggNOG" id="COG0482">
    <property type="taxonomic scope" value="Bacteria"/>
</dbReference>
<dbReference type="HOGENOM" id="CLU_035188_0_2_11"/>
<dbReference type="Proteomes" id="UP000002204">
    <property type="component" value="Chromosome"/>
</dbReference>
<dbReference type="GO" id="GO:0005737">
    <property type="term" value="C:cytoplasm"/>
    <property type="evidence" value="ECO:0007669"/>
    <property type="project" value="UniProtKB-SubCell"/>
</dbReference>
<dbReference type="GO" id="GO:0005524">
    <property type="term" value="F:ATP binding"/>
    <property type="evidence" value="ECO:0007669"/>
    <property type="project" value="UniProtKB-KW"/>
</dbReference>
<dbReference type="GO" id="GO:0000049">
    <property type="term" value="F:tRNA binding"/>
    <property type="evidence" value="ECO:0007669"/>
    <property type="project" value="UniProtKB-KW"/>
</dbReference>
<dbReference type="GO" id="GO:0103016">
    <property type="term" value="F:tRNA-uridine 2-sulfurtransferase activity"/>
    <property type="evidence" value="ECO:0007669"/>
    <property type="project" value="UniProtKB-EC"/>
</dbReference>
<dbReference type="GO" id="GO:0002143">
    <property type="term" value="P:tRNA wobble position uridine thiolation"/>
    <property type="evidence" value="ECO:0007669"/>
    <property type="project" value="TreeGrafter"/>
</dbReference>
<dbReference type="CDD" id="cd01998">
    <property type="entry name" value="MnmA_TRMU-like"/>
    <property type="match status" value="1"/>
</dbReference>
<dbReference type="FunFam" id="3.40.50.620:FF:000057">
    <property type="entry name" value="tRNA-specific 2-thiouridylase MnmA"/>
    <property type="match status" value="1"/>
</dbReference>
<dbReference type="Gene3D" id="2.30.30.280">
    <property type="entry name" value="Adenine nucleotide alpha hydrolases-like domains"/>
    <property type="match status" value="1"/>
</dbReference>
<dbReference type="Gene3D" id="3.40.50.620">
    <property type="entry name" value="HUPs"/>
    <property type="match status" value="1"/>
</dbReference>
<dbReference type="Gene3D" id="2.40.30.10">
    <property type="entry name" value="Translation factors"/>
    <property type="match status" value="1"/>
</dbReference>
<dbReference type="HAMAP" id="MF_00144">
    <property type="entry name" value="tRNA_thiouridyl_MnmA"/>
    <property type="match status" value="1"/>
</dbReference>
<dbReference type="InterPro" id="IPR004506">
    <property type="entry name" value="MnmA-like"/>
</dbReference>
<dbReference type="InterPro" id="IPR046885">
    <property type="entry name" value="MnmA-like_C"/>
</dbReference>
<dbReference type="InterPro" id="IPR046884">
    <property type="entry name" value="MnmA-like_central"/>
</dbReference>
<dbReference type="InterPro" id="IPR023382">
    <property type="entry name" value="MnmA-like_central_sf"/>
</dbReference>
<dbReference type="InterPro" id="IPR014729">
    <property type="entry name" value="Rossmann-like_a/b/a_fold"/>
</dbReference>
<dbReference type="NCBIfam" id="NF001138">
    <property type="entry name" value="PRK00143.1"/>
    <property type="match status" value="1"/>
</dbReference>
<dbReference type="NCBIfam" id="TIGR00420">
    <property type="entry name" value="trmU"/>
    <property type="match status" value="1"/>
</dbReference>
<dbReference type="PANTHER" id="PTHR11933:SF5">
    <property type="entry name" value="MITOCHONDRIAL TRNA-SPECIFIC 2-THIOURIDYLASE 1"/>
    <property type="match status" value="1"/>
</dbReference>
<dbReference type="PANTHER" id="PTHR11933">
    <property type="entry name" value="TRNA 5-METHYLAMINOMETHYL-2-THIOURIDYLATE -METHYLTRANSFERASE"/>
    <property type="match status" value="1"/>
</dbReference>
<dbReference type="Pfam" id="PF03054">
    <property type="entry name" value="tRNA_Me_trans"/>
    <property type="match status" value="1"/>
</dbReference>
<dbReference type="Pfam" id="PF20258">
    <property type="entry name" value="tRNA_Me_trans_C"/>
    <property type="match status" value="1"/>
</dbReference>
<dbReference type="Pfam" id="PF20259">
    <property type="entry name" value="tRNA_Me_trans_M"/>
    <property type="match status" value="1"/>
</dbReference>
<dbReference type="SUPFAM" id="SSF52402">
    <property type="entry name" value="Adenine nucleotide alpha hydrolases-like"/>
    <property type="match status" value="1"/>
</dbReference>
<comment type="function">
    <text evidence="1">Catalyzes the 2-thiolation of uridine at the wobble position (U34) of tRNA, leading to the formation of s(2)U34.</text>
</comment>
<comment type="catalytic activity">
    <reaction evidence="1">
        <text>S-sulfanyl-L-cysteinyl-[protein] + uridine(34) in tRNA + AH2 + ATP = 2-thiouridine(34) in tRNA + L-cysteinyl-[protein] + A + AMP + diphosphate + H(+)</text>
        <dbReference type="Rhea" id="RHEA:47032"/>
        <dbReference type="Rhea" id="RHEA-COMP:10131"/>
        <dbReference type="Rhea" id="RHEA-COMP:11726"/>
        <dbReference type="Rhea" id="RHEA-COMP:11727"/>
        <dbReference type="Rhea" id="RHEA-COMP:11728"/>
        <dbReference type="ChEBI" id="CHEBI:13193"/>
        <dbReference type="ChEBI" id="CHEBI:15378"/>
        <dbReference type="ChEBI" id="CHEBI:17499"/>
        <dbReference type="ChEBI" id="CHEBI:29950"/>
        <dbReference type="ChEBI" id="CHEBI:30616"/>
        <dbReference type="ChEBI" id="CHEBI:33019"/>
        <dbReference type="ChEBI" id="CHEBI:61963"/>
        <dbReference type="ChEBI" id="CHEBI:65315"/>
        <dbReference type="ChEBI" id="CHEBI:87170"/>
        <dbReference type="ChEBI" id="CHEBI:456215"/>
        <dbReference type="EC" id="2.8.1.13"/>
    </reaction>
</comment>
<comment type="subcellular location">
    <subcellularLocation>
        <location evidence="1">Cytoplasm</location>
    </subcellularLocation>
</comment>
<comment type="similarity">
    <text evidence="1">Belongs to the MnmA/TRMU family.</text>
</comment>
<proteinExistence type="inferred from homology"/>
<keyword id="KW-0067">ATP-binding</keyword>
<keyword id="KW-0963">Cytoplasm</keyword>
<keyword id="KW-1015">Disulfide bond</keyword>
<keyword id="KW-0547">Nucleotide-binding</keyword>
<keyword id="KW-0694">RNA-binding</keyword>
<keyword id="KW-0808">Transferase</keyword>
<keyword id="KW-0819">tRNA processing</keyword>
<keyword id="KW-0820">tRNA-binding</keyword>
<evidence type="ECO:0000255" key="1">
    <source>
        <dbReference type="HAMAP-Rule" id="MF_00144"/>
    </source>
</evidence>